<proteinExistence type="evidence at transcript level"/>
<gene>
    <name type="primary">abfC</name>
    <name type="ORF">AN1277</name>
</gene>
<keyword id="KW-0119">Carbohydrate metabolism</keyword>
<keyword id="KW-0325">Glycoprotein</keyword>
<keyword id="KW-0326">Glycosidase</keyword>
<keyword id="KW-0378">Hydrolase</keyword>
<keyword id="KW-0624">Polysaccharide degradation</keyword>
<keyword id="KW-1185">Reference proteome</keyword>
<keyword id="KW-0964">Secreted</keyword>
<keyword id="KW-0732">Signal</keyword>
<name>ABFC_EMENI</name>
<reference key="1">
    <citation type="journal article" date="2006" name="Proc. Natl. Acad. Sci. U.S.A.">
        <title>Development and application of a suite of polysaccharide-degrading enzymes for analyzing plant cell walls.</title>
        <authorList>
            <person name="Bauer S."/>
            <person name="Vasu P."/>
            <person name="Persson S."/>
            <person name="Mort A.J."/>
            <person name="Somerville C.R."/>
        </authorList>
    </citation>
    <scope>NUCLEOTIDE SEQUENCE [MRNA]</scope>
    <scope>FUNCTION</scope>
    <source>
        <strain>FGSC A4 / ATCC 38163 / CBS 112.46 / NRRL 194 / M139</strain>
    </source>
</reference>
<reference key="2">
    <citation type="journal article" date="2005" name="Nature">
        <title>Sequencing of Aspergillus nidulans and comparative analysis with A. fumigatus and A. oryzae.</title>
        <authorList>
            <person name="Galagan J.E."/>
            <person name="Calvo S.E."/>
            <person name="Cuomo C."/>
            <person name="Ma L.-J."/>
            <person name="Wortman J.R."/>
            <person name="Batzoglou S."/>
            <person name="Lee S.-I."/>
            <person name="Bastuerkmen M."/>
            <person name="Spevak C.C."/>
            <person name="Clutterbuck J."/>
            <person name="Kapitonov V."/>
            <person name="Jurka J."/>
            <person name="Scazzocchio C."/>
            <person name="Farman M.L."/>
            <person name="Butler J."/>
            <person name="Purcell S."/>
            <person name="Harris S."/>
            <person name="Braus G.H."/>
            <person name="Draht O."/>
            <person name="Busch S."/>
            <person name="D'Enfert C."/>
            <person name="Bouchier C."/>
            <person name="Goldman G.H."/>
            <person name="Bell-Pedersen D."/>
            <person name="Griffiths-Jones S."/>
            <person name="Doonan J.H."/>
            <person name="Yu J."/>
            <person name="Vienken K."/>
            <person name="Pain A."/>
            <person name="Freitag M."/>
            <person name="Selker E.U."/>
            <person name="Archer D.B."/>
            <person name="Penalva M.A."/>
            <person name="Oakley B.R."/>
            <person name="Momany M."/>
            <person name="Tanaka T."/>
            <person name="Kumagai T."/>
            <person name="Asai K."/>
            <person name="Machida M."/>
            <person name="Nierman W.C."/>
            <person name="Denning D.W."/>
            <person name="Caddick M.X."/>
            <person name="Hynes M."/>
            <person name="Paoletti M."/>
            <person name="Fischer R."/>
            <person name="Miller B.L."/>
            <person name="Dyer P.S."/>
            <person name="Sachs M.S."/>
            <person name="Osmani S.A."/>
            <person name="Birren B.W."/>
        </authorList>
    </citation>
    <scope>NUCLEOTIDE SEQUENCE [LARGE SCALE GENOMIC DNA]</scope>
    <source>
        <strain>FGSC A4 / ATCC 38163 / CBS 112.46 / NRRL 194 / M139</strain>
    </source>
</reference>
<reference key="3">
    <citation type="journal article" date="2009" name="Fungal Genet. Biol.">
        <title>The 2008 update of the Aspergillus nidulans genome annotation: a community effort.</title>
        <authorList>
            <person name="Wortman J.R."/>
            <person name="Gilsenan J.M."/>
            <person name="Joardar V."/>
            <person name="Deegan J."/>
            <person name="Clutterbuck J."/>
            <person name="Andersen M.R."/>
            <person name="Archer D."/>
            <person name="Bencina M."/>
            <person name="Braus G."/>
            <person name="Coutinho P."/>
            <person name="von Dohren H."/>
            <person name="Doonan J."/>
            <person name="Driessen A.J."/>
            <person name="Durek P."/>
            <person name="Espeso E."/>
            <person name="Fekete E."/>
            <person name="Flipphi M."/>
            <person name="Estrada C.G."/>
            <person name="Geysens S."/>
            <person name="Goldman G."/>
            <person name="de Groot P.W."/>
            <person name="Hansen K."/>
            <person name="Harris S.D."/>
            <person name="Heinekamp T."/>
            <person name="Helmstaedt K."/>
            <person name="Henrissat B."/>
            <person name="Hofmann G."/>
            <person name="Homan T."/>
            <person name="Horio T."/>
            <person name="Horiuchi H."/>
            <person name="James S."/>
            <person name="Jones M."/>
            <person name="Karaffa L."/>
            <person name="Karanyi Z."/>
            <person name="Kato M."/>
            <person name="Keller N."/>
            <person name="Kelly D.E."/>
            <person name="Kiel J.A."/>
            <person name="Kim J.M."/>
            <person name="van der Klei I.J."/>
            <person name="Klis F.M."/>
            <person name="Kovalchuk A."/>
            <person name="Krasevec N."/>
            <person name="Kubicek C.P."/>
            <person name="Liu B."/>
            <person name="Maccabe A."/>
            <person name="Meyer V."/>
            <person name="Mirabito P."/>
            <person name="Miskei M."/>
            <person name="Mos M."/>
            <person name="Mullins J."/>
            <person name="Nelson D.R."/>
            <person name="Nielsen J."/>
            <person name="Oakley B.R."/>
            <person name="Osmani S.A."/>
            <person name="Pakula T."/>
            <person name="Paszewski A."/>
            <person name="Paulsen I."/>
            <person name="Pilsyk S."/>
            <person name="Pocsi I."/>
            <person name="Punt P.J."/>
            <person name="Ram A.F."/>
            <person name="Ren Q."/>
            <person name="Robellet X."/>
            <person name="Robson G."/>
            <person name="Seiboth B."/>
            <person name="van Solingen P."/>
            <person name="Specht T."/>
            <person name="Sun J."/>
            <person name="Taheri-Talesh N."/>
            <person name="Takeshita N."/>
            <person name="Ussery D."/>
            <person name="vanKuyk P.A."/>
            <person name="Visser H."/>
            <person name="van de Vondervoort P.J."/>
            <person name="de Vries R.P."/>
            <person name="Walton J."/>
            <person name="Xiang X."/>
            <person name="Xiong Y."/>
            <person name="Zeng A.P."/>
            <person name="Brandt B.W."/>
            <person name="Cornell M.J."/>
            <person name="van den Hondel C.A."/>
            <person name="Visser J."/>
            <person name="Oliver S.G."/>
            <person name="Turner G."/>
        </authorList>
    </citation>
    <scope>GENOME REANNOTATION</scope>
    <source>
        <strain>FGSC A4 / ATCC 38163 / CBS 112.46 / NRRL 194 / M139</strain>
    </source>
</reference>
<protein>
    <recommendedName>
        <fullName>Alpha-L-arabinofuranosidase C</fullName>
        <shortName>ABF C</shortName>
        <shortName>Arabinosidase C</shortName>
        <ecNumber>3.2.1.55</ecNumber>
    </recommendedName>
</protein>
<evidence type="ECO:0000255" key="1"/>
<evidence type="ECO:0000269" key="2">
    <source>
    </source>
</evidence>
<evidence type="ECO:0000305" key="3"/>
<comment type="function">
    <text evidence="2">Alpha-L-arabinofuranosidase involved in the degradation of arabinoxylan, a major component of plant hemicellulose. Acts only on small linear 1,5-alpha-linked L-arabinofuranosyl oligosaccharides.</text>
</comment>
<comment type="catalytic activity">
    <reaction>
        <text>Hydrolysis of terminal non-reducing alpha-L-arabinofuranoside residues in alpha-L-arabinosides.</text>
        <dbReference type="EC" id="3.2.1.55"/>
    </reaction>
</comment>
<comment type="pathway">
    <text>Glycan metabolism; L-arabinan degradation.</text>
</comment>
<comment type="subcellular location">
    <subcellularLocation>
        <location evidence="3">Secreted</location>
    </subcellularLocation>
</comment>
<comment type="similarity">
    <text evidence="3">Belongs to the glycosyl hydrolase 51 family.</text>
</comment>
<feature type="signal peptide" evidence="1">
    <location>
        <begin position="1"/>
        <end status="unknown"/>
    </location>
</feature>
<feature type="chain" id="PRO_0000394616" description="Alpha-L-arabinofuranosidase C">
    <location>
        <begin status="unknown"/>
        <end position="504"/>
    </location>
</feature>
<feature type="glycosylation site" description="N-linked (GlcNAc...) asparagine" evidence="1">
    <location>
        <position position="81"/>
    </location>
</feature>
<feature type="glycosylation site" description="N-linked (GlcNAc...) asparagine" evidence="1">
    <location>
        <position position="152"/>
    </location>
</feature>
<feature type="glycosylation site" description="N-linked (GlcNAc...) asparagine" evidence="1">
    <location>
        <position position="269"/>
    </location>
</feature>
<feature type="glycosylation site" description="N-linked (GlcNAc...) asparagine" evidence="1">
    <location>
        <position position="329"/>
    </location>
</feature>
<sequence length="504" mass="56554">MTTFTKLSEQEAPGISIHPDRRISKINPNIYAGFAEHMGRCIYGGIYDPGNPLSDENGFRKDVLEALKELKVPVIRYPGGNFTATYHWIDGVGPRDQRPARPELAWLGTETNQFGTDEFLKWCEVLGTEPYLCLNMGTGTLDEALAWVDYCNGTRDTYYANLRRKNGREEPYNVKYWALGNEVWGPWQVEQSTKEEYAHKAYQWAKALKLLDPSIELILCGKEGPTSWDYYTLKQTMLPVHSPLSTSAVPLIDMHSIHLYTAHSSHLPNVTAPLAAERAIEITSSLIDLARVENGVPPEQRRPTICFDEWNVWDPIRAEGSKGAEESYNLSDALAVGVWLNVFVRKSKDVGMACIAQSVNVISPLMTTKDGIVKQTTWWPLYLFSNYMRGWTISAHISVSAYEGETHPKWVRGVKDTPWLDVSATLGEDGYVNVVVINIHEEKGIEAKLDGPSGEVTVFTVTGDNPAVTNMKGKEEVGLVETKWDAQGPYVFPKHSLTLLRWKA</sequence>
<organism>
    <name type="scientific">Emericella nidulans (strain FGSC A4 / ATCC 38163 / CBS 112.46 / NRRL 194 / M139)</name>
    <name type="common">Aspergillus nidulans</name>
    <dbReference type="NCBI Taxonomy" id="227321"/>
    <lineage>
        <taxon>Eukaryota</taxon>
        <taxon>Fungi</taxon>
        <taxon>Dikarya</taxon>
        <taxon>Ascomycota</taxon>
        <taxon>Pezizomycotina</taxon>
        <taxon>Eurotiomycetes</taxon>
        <taxon>Eurotiomycetidae</taxon>
        <taxon>Eurotiales</taxon>
        <taxon>Aspergillaceae</taxon>
        <taxon>Aspergillus</taxon>
        <taxon>Aspergillus subgen. Nidulantes</taxon>
    </lineage>
</organism>
<accession>Q5BDV3</accession>
<accession>C8VSG2</accession>
<accession>Q1HFV3</accession>
<dbReference type="EC" id="3.2.1.55"/>
<dbReference type="EMBL" id="DQ490471">
    <property type="protein sequence ID" value="ABF50847.1"/>
    <property type="molecule type" value="mRNA"/>
</dbReference>
<dbReference type="EMBL" id="AACD01000017">
    <property type="protein sequence ID" value="EAA65870.1"/>
    <property type="molecule type" value="Genomic_DNA"/>
</dbReference>
<dbReference type="EMBL" id="BN001308">
    <property type="protein sequence ID" value="CBF87808.1"/>
    <property type="molecule type" value="Genomic_DNA"/>
</dbReference>
<dbReference type="RefSeq" id="XP_658881.1">
    <property type="nucleotide sequence ID" value="XM_653789.1"/>
</dbReference>
<dbReference type="SMR" id="Q5BDV3"/>
<dbReference type="STRING" id="227321.Q5BDV3"/>
<dbReference type="CAZy" id="GH51">
    <property type="family name" value="Glycoside Hydrolase Family 51"/>
</dbReference>
<dbReference type="GlyCosmos" id="Q5BDV3">
    <property type="glycosylation" value="4 sites, No reported glycans"/>
</dbReference>
<dbReference type="EnsemblFungi" id="CBF87808">
    <property type="protein sequence ID" value="CBF87808"/>
    <property type="gene ID" value="ANIA_01277"/>
</dbReference>
<dbReference type="KEGG" id="ani:ANIA_01277"/>
<dbReference type="VEuPathDB" id="FungiDB:AN1277"/>
<dbReference type="eggNOG" id="ENOG502QRW4">
    <property type="taxonomic scope" value="Eukaryota"/>
</dbReference>
<dbReference type="HOGENOM" id="CLU_017810_1_0_1"/>
<dbReference type="InParanoid" id="Q5BDV3"/>
<dbReference type="OMA" id="GETSPKW"/>
<dbReference type="OrthoDB" id="3032304at2759"/>
<dbReference type="UniPathway" id="UPA00667"/>
<dbReference type="Proteomes" id="UP000000560">
    <property type="component" value="Chromosome VIII"/>
</dbReference>
<dbReference type="GO" id="GO:0005576">
    <property type="term" value="C:extracellular region"/>
    <property type="evidence" value="ECO:0007669"/>
    <property type="project" value="UniProtKB-SubCell"/>
</dbReference>
<dbReference type="GO" id="GO:0046556">
    <property type="term" value="F:alpha-L-arabinofuranosidase activity"/>
    <property type="evidence" value="ECO:0000314"/>
    <property type="project" value="UniProtKB"/>
</dbReference>
<dbReference type="GO" id="GO:0031222">
    <property type="term" value="P:arabinan catabolic process"/>
    <property type="evidence" value="ECO:0007669"/>
    <property type="project" value="UniProtKB-UniPathway"/>
</dbReference>
<dbReference type="GO" id="GO:0019566">
    <property type="term" value="P:arabinose metabolic process"/>
    <property type="evidence" value="ECO:0000314"/>
    <property type="project" value="UniProtKB"/>
</dbReference>
<dbReference type="GO" id="GO:0046373">
    <property type="term" value="P:L-arabinose metabolic process"/>
    <property type="evidence" value="ECO:0007669"/>
    <property type="project" value="InterPro"/>
</dbReference>
<dbReference type="GO" id="GO:0045490">
    <property type="term" value="P:pectin catabolic process"/>
    <property type="evidence" value="ECO:0000314"/>
    <property type="project" value="UniProtKB"/>
</dbReference>
<dbReference type="GO" id="GO:0000272">
    <property type="term" value="P:polysaccharide catabolic process"/>
    <property type="evidence" value="ECO:0000318"/>
    <property type="project" value="GO_Central"/>
</dbReference>
<dbReference type="FunFam" id="3.20.20.80:FF:000110">
    <property type="entry name" value="Alpha-L-arabinofuranosidase C"/>
    <property type="match status" value="1"/>
</dbReference>
<dbReference type="Gene3D" id="3.20.20.80">
    <property type="entry name" value="Glycosidases"/>
    <property type="match status" value="1"/>
</dbReference>
<dbReference type="Gene3D" id="2.60.40.1180">
    <property type="entry name" value="Golgi alpha-mannosidase II"/>
    <property type="match status" value="1"/>
</dbReference>
<dbReference type="InterPro" id="IPR010720">
    <property type="entry name" value="Alpha-L-AF_C"/>
</dbReference>
<dbReference type="InterPro" id="IPR013780">
    <property type="entry name" value="Glyco_hydro_b"/>
</dbReference>
<dbReference type="InterPro" id="IPR017853">
    <property type="entry name" value="Glycoside_hydrolase_SF"/>
</dbReference>
<dbReference type="PANTHER" id="PTHR43576:SF3">
    <property type="entry name" value="ALPHA-L-ARABINOFURANOSIDASE C"/>
    <property type="match status" value="1"/>
</dbReference>
<dbReference type="PANTHER" id="PTHR43576">
    <property type="entry name" value="ALPHA-L-ARABINOFURANOSIDASE C-RELATED"/>
    <property type="match status" value="1"/>
</dbReference>
<dbReference type="Pfam" id="PF06964">
    <property type="entry name" value="Alpha-L-AF_C"/>
    <property type="match status" value="1"/>
</dbReference>
<dbReference type="SMART" id="SM00813">
    <property type="entry name" value="Alpha-L-AF_C"/>
    <property type="match status" value="1"/>
</dbReference>
<dbReference type="SUPFAM" id="SSF51445">
    <property type="entry name" value="(Trans)glycosidases"/>
    <property type="match status" value="1"/>
</dbReference>
<dbReference type="SUPFAM" id="SSF51011">
    <property type="entry name" value="Glycosyl hydrolase domain"/>
    <property type="match status" value="1"/>
</dbReference>